<dbReference type="EC" id="6.3.4.4" evidence="1"/>
<dbReference type="EMBL" id="CP000450">
    <property type="protein sequence ID" value="ABI59227.1"/>
    <property type="molecule type" value="Genomic_DNA"/>
</dbReference>
<dbReference type="RefSeq" id="WP_011634051.1">
    <property type="nucleotide sequence ID" value="NC_008344.1"/>
</dbReference>
<dbReference type="SMR" id="Q0AHF5"/>
<dbReference type="STRING" id="335283.Neut_0967"/>
<dbReference type="KEGG" id="net:Neut_0967"/>
<dbReference type="eggNOG" id="COG0104">
    <property type="taxonomic scope" value="Bacteria"/>
</dbReference>
<dbReference type="HOGENOM" id="CLU_029848_0_0_4"/>
<dbReference type="OrthoDB" id="9807553at2"/>
<dbReference type="UniPathway" id="UPA00075">
    <property type="reaction ID" value="UER00335"/>
</dbReference>
<dbReference type="Proteomes" id="UP000001966">
    <property type="component" value="Chromosome"/>
</dbReference>
<dbReference type="GO" id="GO:0005737">
    <property type="term" value="C:cytoplasm"/>
    <property type="evidence" value="ECO:0007669"/>
    <property type="project" value="UniProtKB-SubCell"/>
</dbReference>
<dbReference type="GO" id="GO:0004019">
    <property type="term" value="F:adenylosuccinate synthase activity"/>
    <property type="evidence" value="ECO:0007669"/>
    <property type="project" value="UniProtKB-UniRule"/>
</dbReference>
<dbReference type="GO" id="GO:0005525">
    <property type="term" value="F:GTP binding"/>
    <property type="evidence" value="ECO:0007669"/>
    <property type="project" value="UniProtKB-UniRule"/>
</dbReference>
<dbReference type="GO" id="GO:0000287">
    <property type="term" value="F:magnesium ion binding"/>
    <property type="evidence" value="ECO:0007669"/>
    <property type="project" value="UniProtKB-UniRule"/>
</dbReference>
<dbReference type="GO" id="GO:0044208">
    <property type="term" value="P:'de novo' AMP biosynthetic process"/>
    <property type="evidence" value="ECO:0007669"/>
    <property type="project" value="UniProtKB-UniRule"/>
</dbReference>
<dbReference type="GO" id="GO:0046040">
    <property type="term" value="P:IMP metabolic process"/>
    <property type="evidence" value="ECO:0007669"/>
    <property type="project" value="TreeGrafter"/>
</dbReference>
<dbReference type="CDD" id="cd03108">
    <property type="entry name" value="AdSS"/>
    <property type="match status" value="1"/>
</dbReference>
<dbReference type="FunFam" id="1.10.300.10:FF:000001">
    <property type="entry name" value="Adenylosuccinate synthetase"/>
    <property type="match status" value="1"/>
</dbReference>
<dbReference type="FunFam" id="3.90.170.10:FF:000001">
    <property type="entry name" value="Adenylosuccinate synthetase"/>
    <property type="match status" value="1"/>
</dbReference>
<dbReference type="Gene3D" id="3.40.440.10">
    <property type="entry name" value="Adenylosuccinate Synthetase, subunit A, domain 1"/>
    <property type="match status" value="1"/>
</dbReference>
<dbReference type="Gene3D" id="1.10.300.10">
    <property type="entry name" value="Adenylosuccinate Synthetase, subunit A, domain 2"/>
    <property type="match status" value="1"/>
</dbReference>
<dbReference type="Gene3D" id="3.90.170.10">
    <property type="entry name" value="Adenylosuccinate Synthetase, subunit A, domain 3"/>
    <property type="match status" value="1"/>
</dbReference>
<dbReference type="HAMAP" id="MF_00011">
    <property type="entry name" value="Adenylosucc_synth"/>
    <property type="match status" value="1"/>
</dbReference>
<dbReference type="InterPro" id="IPR018220">
    <property type="entry name" value="Adenylosuccin_syn_GTP-bd"/>
</dbReference>
<dbReference type="InterPro" id="IPR033128">
    <property type="entry name" value="Adenylosuccin_syn_Lys_AS"/>
</dbReference>
<dbReference type="InterPro" id="IPR042109">
    <property type="entry name" value="Adenylosuccinate_synth_dom1"/>
</dbReference>
<dbReference type="InterPro" id="IPR042110">
    <property type="entry name" value="Adenylosuccinate_synth_dom2"/>
</dbReference>
<dbReference type="InterPro" id="IPR042111">
    <property type="entry name" value="Adenylosuccinate_synth_dom3"/>
</dbReference>
<dbReference type="InterPro" id="IPR001114">
    <property type="entry name" value="Adenylosuccinate_synthetase"/>
</dbReference>
<dbReference type="InterPro" id="IPR027417">
    <property type="entry name" value="P-loop_NTPase"/>
</dbReference>
<dbReference type="NCBIfam" id="NF002223">
    <property type="entry name" value="PRK01117.1"/>
    <property type="match status" value="1"/>
</dbReference>
<dbReference type="NCBIfam" id="TIGR00184">
    <property type="entry name" value="purA"/>
    <property type="match status" value="1"/>
</dbReference>
<dbReference type="PANTHER" id="PTHR11846">
    <property type="entry name" value="ADENYLOSUCCINATE SYNTHETASE"/>
    <property type="match status" value="1"/>
</dbReference>
<dbReference type="PANTHER" id="PTHR11846:SF0">
    <property type="entry name" value="ADENYLOSUCCINATE SYNTHETASE"/>
    <property type="match status" value="1"/>
</dbReference>
<dbReference type="Pfam" id="PF00709">
    <property type="entry name" value="Adenylsucc_synt"/>
    <property type="match status" value="1"/>
</dbReference>
<dbReference type="SMART" id="SM00788">
    <property type="entry name" value="Adenylsucc_synt"/>
    <property type="match status" value="1"/>
</dbReference>
<dbReference type="SUPFAM" id="SSF52540">
    <property type="entry name" value="P-loop containing nucleoside triphosphate hydrolases"/>
    <property type="match status" value="1"/>
</dbReference>
<dbReference type="PROSITE" id="PS01266">
    <property type="entry name" value="ADENYLOSUCCIN_SYN_1"/>
    <property type="match status" value="1"/>
</dbReference>
<dbReference type="PROSITE" id="PS00513">
    <property type="entry name" value="ADENYLOSUCCIN_SYN_2"/>
    <property type="match status" value="1"/>
</dbReference>
<accession>Q0AHF5</accession>
<comment type="function">
    <text evidence="1">Plays an important role in the de novo pathway of purine nucleotide biosynthesis. Catalyzes the first committed step in the biosynthesis of AMP from IMP.</text>
</comment>
<comment type="catalytic activity">
    <reaction evidence="1">
        <text>IMP + L-aspartate + GTP = N(6)-(1,2-dicarboxyethyl)-AMP + GDP + phosphate + 2 H(+)</text>
        <dbReference type="Rhea" id="RHEA:15753"/>
        <dbReference type="ChEBI" id="CHEBI:15378"/>
        <dbReference type="ChEBI" id="CHEBI:29991"/>
        <dbReference type="ChEBI" id="CHEBI:37565"/>
        <dbReference type="ChEBI" id="CHEBI:43474"/>
        <dbReference type="ChEBI" id="CHEBI:57567"/>
        <dbReference type="ChEBI" id="CHEBI:58053"/>
        <dbReference type="ChEBI" id="CHEBI:58189"/>
        <dbReference type="EC" id="6.3.4.4"/>
    </reaction>
</comment>
<comment type="cofactor">
    <cofactor evidence="1">
        <name>Mg(2+)</name>
        <dbReference type="ChEBI" id="CHEBI:18420"/>
    </cofactor>
    <text evidence="1">Binds 1 Mg(2+) ion per subunit.</text>
</comment>
<comment type="pathway">
    <text evidence="1">Purine metabolism; AMP biosynthesis via de novo pathway; AMP from IMP: step 1/2.</text>
</comment>
<comment type="subunit">
    <text evidence="1">Homodimer.</text>
</comment>
<comment type="subcellular location">
    <subcellularLocation>
        <location evidence="1">Cytoplasm</location>
    </subcellularLocation>
</comment>
<comment type="similarity">
    <text evidence="1">Belongs to the adenylosuccinate synthetase family.</text>
</comment>
<proteinExistence type="inferred from homology"/>
<name>PURA_NITEC</name>
<organism>
    <name type="scientific">Nitrosomonas eutropha (strain DSM 101675 / C91 / Nm57)</name>
    <dbReference type="NCBI Taxonomy" id="335283"/>
    <lineage>
        <taxon>Bacteria</taxon>
        <taxon>Pseudomonadati</taxon>
        <taxon>Pseudomonadota</taxon>
        <taxon>Betaproteobacteria</taxon>
        <taxon>Nitrosomonadales</taxon>
        <taxon>Nitrosomonadaceae</taxon>
        <taxon>Nitrosomonas</taxon>
    </lineage>
</organism>
<reference key="1">
    <citation type="journal article" date="2007" name="Environ. Microbiol.">
        <title>Whole-genome analysis of the ammonia-oxidizing bacterium, Nitrosomonas eutropha C91: implications for niche adaptation.</title>
        <authorList>
            <person name="Stein L.Y."/>
            <person name="Arp D.J."/>
            <person name="Berube P.M."/>
            <person name="Chain P.S."/>
            <person name="Hauser L."/>
            <person name="Jetten M.S."/>
            <person name="Klotz M.G."/>
            <person name="Larimer F.W."/>
            <person name="Norton J.M."/>
            <person name="Op den Camp H.J.M."/>
            <person name="Shin M."/>
            <person name="Wei X."/>
        </authorList>
    </citation>
    <scope>NUCLEOTIDE SEQUENCE [LARGE SCALE GENOMIC DNA]</scope>
    <source>
        <strain>DSM 101675 / C91 / Nm57</strain>
    </source>
</reference>
<feature type="chain" id="PRO_1000000878" description="Adenylosuccinate synthetase">
    <location>
        <begin position="1"/>
        <end position="432"/>
    </location>
</feature>
<feature type="active site" description="Proton acceptor" evidence="1">
    <location>
        <position position="14"/>
    </location>
</feature>
<feature type="active site" description="Proton donor" evidence="1">
    <location>
        <position position="42"/>
    </location>
</feature>
<feature type="binding site" evidence="1">
    <location>
        <begin position="13"/>
        <end position="19"/>
    </location>
    <ligand>
        <name>GTP</name>
        <dbReference type="ChEBI" id="CHEBI:37565"/>
    </ligand>
</feature>
<feature type="binding site" description="in other chain" evidence="1">
    <location>
        <begin position="14"/>
        <end position="17"/>
    </location>
    <ligand>
        <name>IMP</name>
        <dbReference type="ChEBI" id="CHEBI:58053"/>
        <note>ligand shared between dimeric partners</note>
    </ligand>
</feature>
<feature type="binding site" evidence="1">
    <location>
        <position position="14"/>
    </location>
    <ligand>
        <name>Mg(2+)</name>
        <dbReference type="ChEBI" id="CHEBI:18420"/>
    </ligand>
</feature>
<feature type="binding site" description="in other chain" evidence="1">
    <location>
        <begin position="39"/>
        <end position="42"/>
    </location>
    <ligand>
        <name>IMP</name>
        <dbReference type="ChEBI" id="CHEBI:58053"/>
        <note>ligand shared between dimeric partners</note>
    </ligand>
</feature>
<feature type="binding site" evidence="1">
    <location>
        <begin position="41"/>
        <end position="43"/>
    </location>
    <ligand>
        <name>GTP</name>
        <dbReference type="ChEBI" id="CHEBI:37565"/>
    </ligand>
</feature>
<feature type="binding site" evidence="1">
    <location>
        <position position="41"/>
    </location>
    <ligand>
        <name>Mg(2+)</name>
        <dbReference type="ChEBI" id="CHEBI:18420"/>
    </ligand>
</feature>
<feature type="binding site" description="in other chain" evidence="1">
    <location>
        <position position="130"/>
    </location>
    <ligand>
        <name>IMP</name>
        <dbReference type="ChEBI" id="CHEBI:58053"/>
        <note>ligand shared between dimeric partners</note>
    </ligand>
</feature>
<feature type="binding site" evidence="1">
    <location>
        <position position="144"/>
    </location>
    <ligand>
        <name>IMP</name>
        <dbReference type="ChEBI" id="CHEBI:58053"/>
        <note>ligand shared between dimeric partners</note>
    </ligand>
</feature>
<feature type="binding site" description="in other chain" evidence="1">
    <location>
        <position position="225"/>
    </location>
    <ligand>
        <name>IMP</name>
        <dbReference type="ChEBI" id="CHEBI:58053"/>
        <note>ligand shared between dimeric partners</note>
    </ligand>
</feature>
<feature type="binding site" description="in other chain" evidence="1">
    <location>
        <position position="240"/>
    </location>
    <ligand>
        <name>IMP</name>
        <dbReference type="ChEBI" id="CHEBI:58053"/>
        <note>ligand shared between dimeric partners</note>
    </ligand>
</feature>
<feature type="binding site" evidence="1">
    <location>
        <begin position="300"/>
        <end position="306"/>
    </location>
    <ligand>
        <name>substrate</name>
    </ligand>
</feature>
<feature type="binding site" description="in other chain" evidence="1">
    <location>
        <position position="304"/>
    </location>
    <ligand>
        <name>IMP</name>
        <dbReference type="ChEBI" id="CHEBI:58053"/>
        <note>ligand shared between dimeric partners</note>
    </ligand>
</feature>
<feature type="binding site" evidence="1">
    <location>
        <position position="306"/>
    </location>
    <ligand>
        <name>GTP</name>
        <dbReference type="ChEBI" id="CHEBI:37565"/>
    </ligand>
</feature>
<feature type="binding site" evidence="1">
    <location>
        <begin position="332"/>
        <end position="334"/>
    </location>
    <ligand>
        <name>GTP</name>
        <dbReference type="ChEBI" id="CHEBI:37565"/>
    </ligand>
</feature>
<feature type="binding site" evidence="1">
    <location>
        <begin position="416"/>
        <end position="418"/>
    </location>
    <ligand>
        <name>GTP</name>
        <dbReference type="ChEBI" id="CHEBI:37565"/>
    </ligand>
</feature>
<evidence type="ECO:0000255" key="1">
    <source>
        <dbReference type="HAMAP-Rule" id="MF_00011"/>
    </source>
</evidence>
<keyword id="KW-0963">Cytoplasm</keyword>
<keyword id="KW-0342">GTP-binding</keyword>
<keyword id="KW-0436">Ligase</keyword>
<keyword id="KW-0460">Magnesium</keyword>
<keyword id="KW-0479">Metal-binding</keyword>
<keyword id="KW-0547">Nucleotide-binding</keyword>
<keyword id="KW-0658">Purine biosynthesis</keyword>
<protein>
    <recommendedName>
        <fullName evidence="1">Adenylosuccinate synthetase</fullName>
        <shortName evidence="1">AMPSase</shortName>
        <shortName evidence="1">AdSS</shortName>
        <ecNumber evidence="1">6.3.4.4</ecNumber>
    </recommendedName>
    <alternativeName>
        <fullName evidence="1">IMP--aspartate ligase</fullName>
    </alternativeName>
</protein>
<gene>
    <name evidence="1" type="primary">purA</name>
    <name type="ordered locus">Neut_0967</name>
</gene>
<sequence length="432" mass="47088">MVRNVVVIGTQWGDEGKGKIVDWLTDRAAGVIRFQGGHNAGHTLVVNGEKTVLHLIPSGILRKDVICYIGNGVVLSPGALLDEMSMLEQAGVDVSGRLRISEACPLILPYHIAVDGARELAKGPEKIGTTGRGIGPAYEDKIARRAIRLQDLFYPERFASKLKEVLDYHNFLLKNYYHTATVDYDQILDECLKKAERIQPMVADVPKLLFEANKAGNNLLFEGAQGALLDIDHGTYPFVTSSNCIAGAASVGSGVGPQLLGYVLGITKAYTTRVGSGPFPTELADTTGEYLAQRGNEFGSTTGRPRRCGWFDAVATRRSIQINGVSGLCITKLDVLDGLEKLKICTGYKSKQSDRLYDALPFGADDLADIEPVYEELPGWQACTAGIKDFDQLPKTAQNYLKRIEEVCQTPISMISTGPDRIETIVFHHPFG</sequence>